<proteinExistence type="inferred from homology"/>
<organism>
    <name type="scientific">Rickettsia conorii (strain ATCC VR-613 / Malish 7)</name>
    <dbReference type="NCBI Taxonomy" id="272944"/>
    <lineage>
        <taxon>Bacteria</taxon>
        <taxon>Pseudomonadati</taxon>
        <taxon>Pseudomonadota</taxon>
        <taxon>Alphaproteobacteria</taxon>
        <taxon>Rickettsiales</taxon>
        <taxon>Rickettsiaceae</taxon>
        <taxon>Rickettsieae</taxon>
        <taxon>Rickettsia</taxon>
        <taxon>spotted fever group</taxon>
    </lineage>
</organism>
<keyword id="KW-0687">Ribonucleoprotein</keyword>
<keyword id="KW-0689">Ribosomal protein</keyword>
<accession>Q92JD1</accession>
<dbReference type="EMBL" id="AE006914">
    <property type="protein sequence ID" value="AAL02674.1"/>
    <property type="molecule type" value="Genomic_DNA"/>
</dbReference>
<dbReference type="PIR" id="H97716">
    <property type="entry name" value="H97716"/>
</dbReference>
<dbReference type="RefSeq" id="WP_004996729.1">
    <property type="nucleotide sequence ID" value="NC_003103.1"/>
</dbReference>
<dbReference type="SMR" id="Q92JD1"/>
<dbReference type="GeneID" id="95361857"/>
<dbReference type="KEGG" id="rco:RC0136"/>
<dbReference type="HOGENOM" id="CLU_064548_4_2_5"/>
<dbReference type="Proteomes" id="UP000000816">
    <property type="component" value="Chromosome"/>
</dbReference>
<dbReference type="GO" id="GO:1990904">
    <property type="term" value="C:ribonucleoprotein complex"/>
    <property type="evidence" value="ECO:0007669"/>
    <property type="project" value="UniProtKB-KW"/>
</dbReference>
<dbReference type="GO" id="GO:0005840">
    <property type="term" value="C:ribosome"/>
    <property type="evidence" value="ECO:0007669"/>
    <property type="project" value="UniProtKB-KW"/>
</dbReference>
<dbReference type="GO" id="GO:0003735">
    <property type="term" value="F:structural constituent of ribosome"/>
    <property type="evidence" value="ECO:0007669"/>
    <property type="project" value="InterPro"/>
</dbReference>
<dbReference type="GO" id="GO:0006412">
    <property type="term" value="P:translation"/>
    <property type="evidence" value="ECO:0007669"/>
    <property type="project" value="UniProtKB-UniRule"/>
</dbReference>
<dbReference type="Gene3D" id="2.30.170.40">
    <property type="entry name" value="Ribosomal protein L28/L24"/>
    <property type="match status" value="1"/>
</dbReference>
<dbReference type="HAMAP" id="MF_00373">
    <property type="entry name" value="Ribosomal_bL28"/>
    <property type="match status" value="1"/>
</dbReference>
<dbReference type="InterPro" id="IPR026569">
    <property type="entry name" value="Ribosomal_bL28"/>
</dbReference>
<dbReference type="InterPro" id="IPR034704">
    <property type="entry name" value="Ribosomal_bL28/bL31-like_sf"/>
</dbReference>
<dbReference type="InterPro" id="IPR001383">
    <property type="entry name" value="Ribosomal_bL28_bact-type"/>
</dbReference>
<dbReference type="InterPro" id="IPR037147">
    <property type="entry name" value="Ribosomal_bL28_sf"/>
</dbReference>
<dbReference type="NCBIfam" id="TIGR00009">
    <property type="entry name" value="L28"/>
    <property type="match status" value="1"/>
</dbReference>
<dbReference type="PANTHER" id="PTHR13528">
    <property type="entry name" value="39S RIBOSOMAL PROTEIN L28, MITOCHONDRIAL"/>
    <property type="match status" value="1"/>
</dbReference>
<dbReference type="PANTHER" id="PTHR13528:SF2">
    <property type="entry name" value="LARGE RIBOSOMAL SUBUNIT PROTEIN BL28M"/>
    <property type="match status" value="1"/>
</dbReference>
<dbReference type="Pfam" id="PF00830">
    <property type="entry name" value="Ribosomal_L28"/>
    <property type="match status" value="1"/>
</dbReference>
<dbReference type="SUPFAM" id="SSF143800">
    <property type="entry name" value="L28p-like"/>
    <property type="match status" value="1"/>
</dbReference>
<name>RL28_RICCN</name>
<gene>
    <name evidence="1" type="primary">rpmB</name>
    <name type="ordered locus">RC0136</name>
</gene>
<sequence length="97" mass="10766">MSRKCELTGVGVLYGNNVSHSQRKTRRRFEPNLRSVKFTSDITAGEYRLSVNARCISSVEKAGGFDAYILKADDNVLSSNARAIKKKIIQTKTAKSL</sequence>
<protein>
    <recommendedName>
        <fullName evidence="1">Large ribosomal subunit protein bL28</fullName>
    </recommendedName>
    <alternativeName>
        <fullName evidence="2">50S ribosomal protein L28</fullName>
    </alternativeName>
</protein>
<evidence type="ECO:0000255" key="1">
    <source>
        <dbReference type="HAMAP-Rule" id="MF_00373"/>
    </source>
</evidence>
<evidence type="ECO:0000305" key="2"/>
<comment type="similarity">
    <text evidence="1">Belongs to the bacterial ribosomal protein bL28 family.</text>
</comment>
<reference key="1">
    <citation type="journal article" date="2001" name="Science">
        <title>Mechanisms of evolution in Rickettsia conorii and R. prowazekii.</title>
        <authorList>
            <person name="Ogata H."/>
            <person name="Audic S."/>
            <person name="Renesto-Audiffren P."/>
            <person name="Fournier P.-E."/>
            <person name="Barbe V."/>
            <person name="Samson D."/>
            <person name="Roux V."/>
            <person name="Cossart P."/>
            <person name="Weissenbach J."/>
            <person name="Claverie J.-M."/>
            <person name="Raoult D."/>
        </authorList>
    </citation>
    <scope>NUCLEOTIDE SEQUENCE [LARGE SCALE GENOMIC DNA]</scope>
    <source>
        <strain>ATCC VR-613 / Malish 7</strain>
    </source>
</reference>
<feature type="chain" id="PRO_0000178538" description="Large ribosomal subunit protein bL28">
    <location>
        <begin position="1"/>
        <end position="97"/>
    </location>
</feature>